<keyword id="KW-0324">Glycolysis</keyword>
<keyword id="KW-0456">Lyase</keyword>
<keyword id="KW-1185">Reference proteome</keyword>
<keyword id="KW-0704">Schiff base</keyword>
<proteinExistence type="evidence at transcript level"/>
<protein>
    <recommendedName>
        <fullName evidence="9">Fructose-bisphosphate aldolase C-A</fullName>
        <ecNumber>4.1.2.13</ecNumber>
    </recommendedName>
    <alternativeName>
        <fullName evidence="9">Aldolase C-like</fullName>
    </alternativeName>
    <alternativeName>
        <fullName evidence="2">Brain-type aldolase-A</fullName>
    </alternativeName>
</protein>
<dbReference type="EC" id="4.1.2.13"/>
<dbReference type="EMBL" id="BC098624">
    <property type="protein sequence ID" value="AAH98624.1"/>
    <property type="molecule type" value="mRNA"/>
</dbReference>
<dbReference type="RefSeq" id="NP_001025123.1">
    <property type="nucleotide sequence ID" value="NM_001029952.1"/>
</dbReference>
<dbReference type="SMR" id="Q4KMC8"/>
<dbReference type="FunCoup" id="Q4KMC8">
    <property type="interactions" value="458"/>
</dbReference>
<dbReference type="STRING" id="7955.ENSDARP00000074827"/>
<dbReference type="PaxDb" id="7955-ENSDARP00000074827"/>
<dbReference type="GeneID" id="792692"/>
<dbReference type="KEGG" id="dre:792692"/>
<dbReference type="AGR" id="ZFIN:ZDB-GENE-050706-128"/>
<dbReference type="CTD" id="792692"/>
<dbReference type="ZFIN" id="ZDB-GENE-050706-128">
    <property type="gene designation" value="aldoca"/>
</dbReference>
<dbReference type="eggNOG" id="KOG1557">
    <property type="taxonomic scope" value="Eukaryota"/>
</dbReference>
<dbReference type="InParanoid" id="Q4KMC8"/>
<dbReference type="OrthoDB" id="36455at2759"/>
<dbReference type="PhylomeDB" id="Q4KMC8"/>
<dbReference type="UniPathway" id="UPA00109">
    <property type="reaction ID" value="UER00183"/>
</dbReference>
<dbReference type="PRO" id="PR:Q4KMC8"/>
<dbReference type="Proteomes" id="UP000000437">
    <property type="component" value="Alternate scaffold 15"/>
</dbReference>
<dbReference type="Proteomes" id="UP000000437">
    <property type="component" value="Chromosome 15"/>
</dbReference>
<dbReference type="GO" id="GO:0005829">
    <property type="term" value="C:cytosol"/>
    <property type="evidence" value="ECO:0000318"/>
    <property type="project" value="GO_Central"/>
</dbReference>
<dbReference type="GO" id="GO:0004332">
    <property type="term" value="F:fructose-bisphosphate aldolase activity"/>
    <property type="evidence" value="ECO:0000318"/>
    <property type="project" value="GO_Central"/>
</dbReference>
<dbReference type="GO" id="GO:0030388">
    <property type="term" value="P:fructose 1,6-bisphosphate metabolic process"/>
    <property type="evidence" value="ECO:0000318"/>
    <property type="project" value="GO_Central"/>
</dbReference>
<dbReference type="GO" id="GO:0006096">
    <property type="term" value="P:glycolytic process"/>
    <property type="evidence" value="ECO:0000318"/>
    <property type="project" value="GO_Central"/>
</dbReference>
<dbReference type="CDD" id="cd00948">
    <property type="entry name" value="FBP_aldolase_I_a"/>
    <property type="match status" value="1"/>
</dbReference>
<dbReference type="FunFam" id="3.20.20.70:FF:000021">
    <property type="entry name" value="Fructose-bisphosphate aldolase"/>
    <property type="match status" value="1"/>
</dbReference>
<dbReference type="Gene3D" id="3.20.20.70">
    <property type="entry name" value="Aldolase class I"/>
    <property type="match status" value="1"/>
</dbReference>
<dbReference type="InterPro" id="IPR029768">
    <property type="entry name" value="Aldolase_I_AS"/>
</dbReference>
<dbReference type="InterPro" id="IPR013785">
    <property type="entry name" value="Aldolase_TIM"/>
</dbReference>
<dbReference type="InterPro" id="IPR000741">
    <property type="entry name" value="FBA_I"/>
</dbReference>
<dbReference type="NCBIfam" id="NF033379">
    <property type="entry name" value="FrucBisAld_I"/>
    <property type="match status" value="1"/>
</dbReference>
<dbReference type="PANTHER" id="PTHR11627">
    <property type="entry name" value="FRUCTOSE-BISPHOSPHATE ALDOLASE"/>
    <property type="match status" value="1"/>
</dbReference>
<dbReference type="Pfam" id="PF00274">
    <property type="entry name" value="Glycolytic"/>
    <property type="match status" value="1"/>
</dbReference>
<dbReference type="SUPFAM" id="SSF51569">
    <property type="entry name" value="Aldolase"/>
    <property type="match status" value="1"/>
</dbReference>
<dbReference type="PROSITE" id="PS00158">
    <property type="entry name" value="ALDOLASE_CLASS_I"/>
    <property type="match status" value="1"/>
</dbReference>
<gene>
    <name evidence="9" type="primary">aldoca</name>
    <name evidence="9" type="synonym">aldocl</name>
    <name evidence="6" type="synonym">zebrin II</name>
    <name type="ORF">zgc:112357</name>
</gene>
<reference evidence="8" key="1">
    <citation type="submission" date="2005-07" db="EMBL/GenBank/DDBJ databases">
        <authorList>
            <consortium name="NIH - Zebrafish Gene Collection (ZGC) project"/>
        </authorList>
    </citation>
    <scope>NUCLEOTIDE SEQUENCE [LARGE SCALE MRNA]</scope>
    <source>
        <tissue evidence="8">Brain</tissue>
    </source>
</reference>
<reference evidence="7" key="2">
    <citation type="journal article" date="2006" name="J. Neurobiol.">
        <title>Olfactory imprinting is correlated with changes in gene expression in the olfactory epithelia of the zebrafish.</title>
        <authorList>
            <person name="Harden M.V."/>
            <person name="Newton L.A."/>
            <person name="Lloyd R.C."/>
            <person name="Whitlock K.E."/>
        </authorList>
    </citation>
    <scope>INDUCTION</scope>
</reference>
<reference evidence="7" key="3">
    <citation type="journal article" date="2009" name="Dev. Biol.">
        <title>Anatomy of zebrafish cerebellum and screen for mutations affecting its development.</title>
        <authorList>
            <person name="Bae Y.-K."/>
            <person name="Kani S."/>
            <person name="Shimizu T."/>
            <person name="Tanabe K."/>
            <person name="Nojima H."/>
            <person name="Kimura Y."/>
            <person name="Higashijima S."/>
            <person name="Hibi M."/>
        </authorList>
    </citation>
    <scope>TISSUE SPECIFICITY</scope>
</reference>
<feature type="initiator methionine" description="Removed" evidence="2">
    <location>
        <position position="1"/>
    </location>
</feature>
<feature type="chain" id="PRO_0000389523" description="Fructose-bisphosphate aldolase C-A" evidence="3">
    <location>
        <begin position="2"/>
        <end position="364"/>
    </location>
</feature>
<feature type="active site" description="Proton acceptor" evidence="1">
    <location>
        <position position="188"/>
    </location>
</feature>
<feature type="active site" description="Schiff-base intermediate with dihydroxyacetone-P" evidence="2">
    <location>
        <position position="230"/>
    </location>
</feature>
<feature type="binding site" evidence="2">
    <location>
        <position position="56"/>
    </location>
    <ligand>
        <name>substrate</name>
    </ligand>
</feature>
<feature type="binding site" evidence="2">
    <location>
        <position position="147"/>
    </location>
    <ligand>
        <name>substrate</name>
    </ligand>
</feature>
<feature type="site" description="Necessary for preference for fructose 1,6-bisphosphate over fructose 1-phosphate" evidence="2">
    <location>
        <position position="364"/>
    </location>
</feature>
<organism>
    <name type="scientific">Danio rerio</name>
    <name type="common">Zebrafish</name>
    <name type="synonym">Brachydanio rerio</name>
    <dbReference type="NCBI Taxonomy" id="7955"/>
    <lineage>
        <taxon>Eukaryota</taxon>
        <taxon>Metazoa</taxon>
        <taxon>Chordata</taxon>
        <taxon>Craniata</taxon>
        <taxon>Vertebrata</taxon>
        <taxon>Euteleostomi</taxon>
        <taxon>Actinopterygii</taxon>
        <taxon>Neopterygii</taxon>
        <taxon>Teleostei</taxon>
        <taxon>Ostariophysi</taxon>
        <taxon>Cypriniformes</taxon>
        <taxon>Danionidae</taxon>
        <taxon>Danioninae</taxon>
        <taxon>Danio</taxon>
    </lineage>
</organism>
<accession>Q4KMC8</accession>
<comment type="catalytic activity">
    <reaction evidence="7">
        <text>beta-D-fructose 1,6-bisphosphate = D-glyceraldehyde 3-phosphate + dihydroxyacetone phosphate</text>
        <dbReference type="Rhea" id="RHEA:14729"/>
        <dbReference type="ChEBI" id="CHEBI:32966"/>
        <dbReference type="ChEBI" id="CHEBI:57642"/>
        <dbReference type="ChEBI" id="CHEBI:59776"/>
        <dbReference type="EC" id="4.1.2.13"/>
    </reaction>
</comment>
<comment type="pathway">
    <text evidence="7">Carbohydrate degradation; glycolysis; D-glyceraldehyde 3-phosphate and glycerone phosphate from D-glucose: step 4/4.</text>
</comment>
<comment type="subunit">
    <text evidence="2">Homotetramer.</text>
</comment>
<comment type="tissue specificity">
    <text evidence="5">Expressed specifically in Purkinje cells in the brain.</text>
</comment>
<comment type="induction">
    <text evidence="4">By phenylethyl alcohol (PEA) in the olfactory sensory epithelium.</text>
</comment>
<comment type="similarity">
    <text evidence="3">Belongs to the class I fructose-bisphosphate aldolase family.</text>
</comment>
<evidence type="ECO:0000250" key="1">
    <source>
        <dbReference type="UniProtKB" id="P00883"/>
    </source>
</evidence>
<evidence type="ECO:0000250" key="2">
    <source>
        <dbReference type="UniProtKB" id="P09117"/>
    </source>
</evidence>
<evidence type="ECO:0000255" key="3"/>
<evidence type="ECO:0000269" key="4">
    <source>
    </source>
</evidence>
<evidence type="ECO:0000269" key="5">
    <source>
    </source>
</evidence>
<evidence type="ECO:0000303" key="6">
    <source>
    </source>
</evidence>
<evidence type="ECO:0000305" key="7"/>
<evidence type="ECO:0000312" key="8">
    <source>
        <dbReference type="EMBL" id="AAH98624.1"/>
    </source>
</evidence>
<evidence type="ECO:0000312" key="9">
    <source>
        <dbReference type="ZFIN" id="ZDB-GENE-050706-128"/>
    </source>
</evidence>
<name>ALDCA_DANRE</name>
<sequence>MTHQFPPLTTEQKKELHEIALRIVSPGKGILAADESIGSMGKRLNQIGVENNEENRRLFRQVLFTADDRIDNCIGGVIFFHETLYQNSDDGVPFVKMIKDKGITIGIKVDKGVVPLPGTNGETATQGLDGLSERCAQYKKDGADFAKWRCVMKISETTPSNLCITENAKVLARYASICQQHGIVPIVEPEILPDGDHNLKRCQFVTERVLAAVYKAMFDHHVYLEGTLLKPNMVTPGHGCPTKYSAEEVAMATVTALRRTVPPAVTGVTFLSGGQSEEEASINLSAINNCRLVKPWALTFSFGRALQASALKTWRGQRENEAAATEEFIKRAEINSLASQGKYTVCGDSSGATGLSHYLSSYAY</sequence>